<protein>
    <recommendedName>
        <fullName evidence="1">3-dehydroquinate synthase</fullName>
        <shortName evidence="1">DHQS</shortName>
        <ecNumber evidence="1">4.2.3.4</ecNumber>
    </recommendedName>
</protein>
<organism>
    <name type="scientific">Corynebacterium glutamicum (strain R)</name>
    <dbReference type="NCBI Taxonomy" id="340322"/>
    <lineage>
        <taxon>Bacteria</taxon>
        <taxon>Bacillati</taxon>
        <taxon>Actinomycetota</taxon>
        <taxon>Actinomycetes</taxon>
        <taxon>Mycobacteriales</taxon>
        <taxon>Corynebacteriaceae</taxon>
        <taxon>Corynebacterium</taxon>
    </lineage>
</organism>
<feature type="chain" id="PRO_1000094495" description="3-dehydroquinate synthase">
    <location>
        <begin position="1"/>
        <end position="365"/>
    </location>
</feature>
<feature type="binding site" evidence="1">
    <location>
        <begin position="75"/>
        <end position="80"/>
    </location>
    <ligand>
        <name>NAD(+)</name>
        <dbReference type="ChEBI" id="CHEBI:57540"/>
    </ligand>
</feature>
<feature type="binding site" evidence="1">
    <location>
        <begin position="109"/>
        <end position="113"/>
    </location>
    <ligand>
        <name>NAD(+)</name>
        <dbReference type="ChEBI" id="CHEBI:57540"/>
    </ligand>
</feature>
<feature type="binding site" evidence="1">
    <location>
        <begin position="133"/>
        <end position="134"/>
    </location>
    <ligand>
        <name>NAD(+)</name>
        <dbReference type="ChEBI" id="CHEBI:57540"/>
    </ligand>
</feature>
<feature type="binding site" evidence="1">
    <location>
        <position position="146"/>
    </location>
    <ligand>
        <name>NAD(+)</name>
        <dbReference type="ChEBI" id="CHEBI:57540"/>
    </ligand>
</feature>
<feature type="binding site" evidence="1">
    <location>
        <position position="155"/>
    </location>
    <ligand>
        <name>NAD(+)</name>
        <dbReference type="ChEBI" id="CHEBI:57540"/>
    </ligand>
</feature>
<feature type="binding site" evidence="1">
    <location>
        <position position="188"/>
    </location>
    <ligand>
        <name>Zn(2+)</name>
        <dbReference type="ChEBI" id="CHEBI:29105"/>
    </ligand>
</feature>
<feature type="binding site" evidence="1">
    <location>
        <position position="253"/>
    </location>
    <ligand>
        <name>Zn(2+)</name>
        <dbReference type="ChEBI" id="CHEBI:29105"/>
    </ligand>
</feature>
<feature type="binding site" evidence="1">
    <location>
        <position position="269"/>
    </location>
    <ligand>
        <name>Zn(2+)</name>
        <dbReference type="ChEBI" id="CHEBI:29105"/>
    </ligand>
</feature>
<name>AROB_CORGB</name>
<proteinExistence type="inferred from homology"/>
<keyword id="KW-0028">Amino-acid biosynthesis</keyword>
<keyword id="KW-0057">Aromatic amino acid biosynthesis</keyword>
<keyword id="KW-0170">Cobalt</keyword>
<keyword id="KW-0963">Cytoplasm</keyword>
<keyword id="KW-0456">Lyase</keyword>
<keyword id="KW-0479">Metal-binding</keyword>
<keyword id="KW-0520">NAD</keyword>
<keyword id="KW-0547">Nucleotide-binding</keyword>
<keyword id="KW-0862">Zinc</keyword>
<accession>A4QEJ6</accession>
<gene>
    <name evidence="1" type="primary">aroB</name>
    <name type="ordered locus">cgR_1670</name>
</gene>
<comment type="function">
    <text evidence="1">Catalyzes the conversion of 3-deoxy-D-arabino-heptulosonate 7-phosphate (DAHP) to dehydroquinate (DHQ).</text>
</comment>
<comment type="catalytic activity">
    <reaction evidence="1">
        <text>7-phospho-2-dehydro-3-deoxy-D-arabino-heptonate = 3-dehydroquinate + phosphate</text>
        <dbReference type="Rhea" id="RHEA:21968"/>
        <dbReference type="ChEBI" id="CHEBI:32364"/>
        <dbReference type="ChEBI" id="CHEBI:43474"/>
        <dbReference type="ChEBI" id="CHEBI:58394"/>
        <dbReference type="EC" id="4.2.3.4"/>
    </reaction>
</comment>
<comment type="cofactor">
    <cofactor evidence="1">
        <name>Co(2+)</name>
        <dbReference type="ChEBI" id="CHEBI:48828"/>
    </cofactor>
    <cofactor evidence="1">
        <name>Zn(2+)</name>
        <dbReference type="ChEBI" id="CHEBI:29105"/>
    </cofactor>
    <text evidence="1">Binds 1 divalent metal cation per subunit. Can use either Co(2+) or Zn(2+).</text>
</comment>
<comment type="cofactor">
    <cofactor evidence="1">
        <name>NAD(+)</name>
        <dbReference type="ChEBI" id="CHEBI:57540"/>
    </cofactor>
</comment>
<comment type="pathway">
    <text evidence="1">Metabolic intermediate biosynthesis; chorismate biosynthesis; chorismate from D-erythrose 4-phosphate and phosphoenolpyruvate: step 2/7.</text>
</comment>
<comment type="subcellular location">
    <subcellularLocation>
        <location evidence="1">Cytoplasm</location>
    </subcellularLocation>
</comment>
<comment type="similarity">
    <text evidence="1">Belongs to the sugar phosphate cyclases superfamily. Dehydroquinate synthase family.</text>
</comment>
<evidence type="ECO:0000255" key="1">
    <source>
        <dbReference type="HAMAP-Rule" id="MF_00110"/>
    </source>
</evidence>
<reference key="1">
    <citation type="journal article" date="2007" name="Microbiology">
        <title>Comparative analysis of the Corynebacterium glutamicum group and complete genome sequence of strain R.</title>
        <authorList>
            <person name="Yukawa H."/>
            <person name="Omumasaba C.A."/>
            <person name="Nonaka H."/>
            <person name="Kos P."/>
            <person name="Okai N."/>
            <person name="Suzuki N."/>
            <person name="Suda M."/>
            <person name="Tsuge Y."/>
            <person name="Watanabe J."/>
            <person name="Ikeda Y."/>
            <person name="Vertes A.A."/>
            <person name="Inui M."/>
        </authorList>
    </citation>
    <scope>NUCLEOTIDE SEQUENCE [LARGE SCALE GENOMIC DNA]</scope>
    <source>
        <strain>R</strain>
    </source>
</reference>
<sequence>MSAAQIFNTVHVNGSSPYDVHIGSGLNELIVQRAAESGAEQVAILHQPSMDDIASELDAALVAAGLKVLHLNVPDAENGKSLEVAGQCWDELGGAAFGRRDIVIGLGGGAATDLAGFVAAAWMRGVRVIQVPTTLLAMVDAAVGGKTGINTAAGKNLVGAFHEPDAVFIDTERLATLPDAEIIAGSAEIIKTGFIADPEILRLYETDPAACLKKEVEGSHLPELIWRSVTVKGSVVGQDLKESSLREILNYGHTFAHAVELRENFRWRHGNAVAVGMMFIANLSHKLGLIDAPLLERHRSILAAIGLPTSYEGGAFDELYDGMTRDKKNRDGNIRFVALTAVGEVTRIEGPSKQDLQSAYEAISH</sequence>
<dbReference type="EC" id="4.2.3.4" evidence="1"/>
<dbReference type="EMBL" id="AP009044">
    <property type="protein sequence ID" value="BAF54662.1"/>
    <property type="molecule type" value="Genomic_DNA"/>
</dbReference>
<dbReference type="RefSeq" id="WP_011897318.1">
    <property type="nucleotide sequence ID" value="NC_009342.1"/>
</dbReference>
<dbReference type="SMR" id="A4QEJ6"/>
<dbReference type="KEGG" id="cgt:cgR_1670"/>
<dbReference type="HOGENOM" id="CLU_001201_0_3_11"/>
<dbReference type="PhylomeDB" id="A4QEJ6"/>
<dbReference type="UniPathway" id="UPA00053">
    <property type="reaction ID" value="UER00085"/>
</dbReference>
<dbReference type="Proteomes" id="UP000006698">
    <property type="component" value="Chromosome"/>
</dbReference>
<dbReference type="GO" id="GO:0005737">
    <property type="term" value="C:cytoplasm"/>
    <property type="evidence" value="ECO:0007669"/>
    <property type="project" value="UniProtKB-SubCell"/>
</dbReference>
<dbReference type="GO" id="GO:0003856">
    <property type="term" value="F:3-dehydroquinate synthase activity"/>
    <property type="evidence" value="ECO:0007669"/>
    <property type="project" value="UniProtKB-UniRule"/>
</dbReference>
<dbReference type="GO" id="GO:0046872">
    <property type="term" value="F:metal ion binding"/>
    <property type="evidence" value="ECO:0007669"/>
    <property type="project" value="UniProtKB-KW"/>
</dbReference>
<dbReference type="GO" id="GO:0000166">
    <property type="term" value="F:nucleotide binding"/>
    <property type="evidence" value="ECO:0007669"/>
    <property type="project" value="UniProtKB-KW"/>
</dbReference>
<dbReference type="GO" id="GO:0008652">
    <property type="term" value="P:amino acid biosynthetic process"/>
    <property type="evidence" value="ECO:0007669"/>
    <property type="project" value="UniProtKB-KW"/>
</dbReference>
<dbReference type="GO" id="GO:0009073">
    <property type="term" value="P:aromatic amino acid family biosynthetic process"/>
    <property type="evidence" value="ECO:0007669"/>
    <property type="project" value="UniProtKB-KW"/>
</dbReference>
<dbReference type="GO" id="GO:0009423">
    <property type="term" value="P:chorismate biosynthetic process"/>
    <property type="evidence" value="ECO:0007669"/>
    <property type="project" value="UniProtKB-UniRule"/>
</dbReference>
<dbReference type="CDD" id="cd08195">
    <property type="entry name" value="DHQS"/>
    <property type="match status" value="1"/>
</dbReference>
<dbReference type="FunFam" id="3.40.50.1970:FF:000007">
    <property type="entry name" value="Pentafunctional AROM polypeptide"/>
    <property type="match status" value="1"/>
</dbReference>
<dbReference type="Gene3D" id="3.40.50.1970">
    <property type="match status" value="1"/>
</dbReference>
<dbReference type="Gene3D" id="1.20.1090.10">
    <property type="entry name" value="Dehydroquinate synthase-like - alpha domain"/>
    <property type="match status" value="1"/>
</dbReference>
<dbReference type="HAMAP" id="MF_00110">
    <property type="entry name" value="DHQ_synthase"/>
    <property type="match status" value="1"/>
</dbReference>
<dbReference type="InterPro" id="IPR050071">
    <property type="entry name" value="Dehydroquinate_synthase"/>
</dbReference>
<dbReference type="InterPro" id="IPR016037">
    <property type="entry name" value="DHQ_synth_AroB"/>
</dbReference>
<dbReference type="InterPro" id="IPR030963">
    <property type="entry name" value="DHQ_synth_fam"/>
</dbReference>
<dbReference type="InterPro" id="IPR030960">
    <property type="entry name" value="DHQS/DOIS_N"/>
</dbReference>
<dbReference type="InterPro" id="IPR056179">
    <property type="entry name" value="DHQS_C"/>
</dbReference>
<dbReference type="NCBIfam" id="TIGR01357">
    <property type="entry name" value="aroB"/>
    <property type="match status" value="1"/>
</dbReference>
<dbReference type="PANTHER" id="PTHR43622">
    <property type="entry name" value="3-DEHYDROQUINATE SYNTHASE"/>
    <property type="match status" value="1"/>
</dbReference>
<dbReference type="PANTHER" id="PTHR43622:SF7">
    <property type="entry name" value="3-DEHYDROQUINATE SYNTHASE, CHLOROPLASTIC"/>
    <property type="match status" value="1"/>
</dbReference>
<dbReference type="Pfam" id="PF01761">
    <property type="entry name" value="DHQ_synthase"/>
    <property type="match status" value="1"/>
</dbReference>
<dbReference type="Pfam" id="PF24621">
    <property type="entry name" value="DHQS_C"/>
    <property type="match status" value="1"/>
</dbReference>
<dbReference type="PIRSF" id="PIRSF001455">
    <property type="entry name" value="DHQ_synth"/>
    <property type="match status" value="1"/>
</dbReference>
<dbReference type="SUPFAM" id="SSF56796">
    <property type="entry name" value="Dehydroquinate synthase-like"/>
    <property type="match status" value="1"/>
</dbReference>